<feature type="chain" id="PRO_0000414791" description="Cell division protein DivIB">
    <location>
        <begin position="1"/>
        <end position="382"/>
    </location>
</feature>
<feature type="topological domain" description="Cytoplasmic" evidence="1">
    <location>
        <begin position="1"/>
        <end position="103"/>
    </location>
</feature>
<feature type="transmembrane region" description="Helical" evidence="1">
    <location>
        <begin position="104"/>
        <end position="124"/>
    </location>
</feature>
<feature type="topological domain" description="Extracellular" evidence="1">
    <location>
        <begin position="125"/>
        <end position="382"/>
    </location>
</feature>
<feature type="domain" description="POTRA" evidence="2">
    <location>
        <begin position="125"/>
        <end position="196"/>
    </location>
</feature>
<feature type="region of interest" description="Disordered" evidence="3">
    <location>
        <begin position="36"/>
        <end position="92"/>
    </location>
</feature>
<feature type="region of interest" description="Disordered" evidence="3">
    <location>
        <begin position="322"/>
        <end position="382"/>
    </location>
</feature>
<feature type="compositionally biased region" description="Basic and acidic residues" evidence="3">
    <location>
        <begin position="36"/>
        <end position="49"/>
    </location>
</feature>
<feature type="compositionally biased region" description="Basic and acidic residues" evidence="3">
    <location>
        <begin position="60"/>
        <end position="70"/>
    </location>
</feature>
<feature type="compositionally biased region" description="Basic and acidic residues" evidence="3">
    <location>
        <begin position="338"/>
        <end position="352"/>
    </location>
</feature>
<keyword id="KW-0131">Cell cycle</keyword>
<keyword id="KW-0132">Cell division</keyword>
<keyword id="KW-1003">Cell membrane</keyword>
<keyword id="KW-0472">Membrane</keyword>
<keyword id="KW-0812">Transmembrane</keyword>
<keyword id="KW-1133">Transmembrane helix</keyword>
<name>DIVIB_STRPD</name>
<sequence length="382" mass="43477">MAKDKEKQSDDKLVLTEWQKRNIEFLKKKKQQAEEEKKLKEKLLSDKKAQQQAQNASEAVELKTDEKTDSQEIESETTSKPKKTKKVRQPKEKSATQIAFQKSLPVLLGALLLMAVSIFMITPYSKKKEFSVRGNHQTNLDELIKASKVKASDYWLTLLISPGQYERPILRTIPWVKSVHLSYHFPNHFLFNVIEFEIIAYAQVENGFQPILENGKRVDKVRASELPKSFLILNLKDEKAIQQLVKQLTTLPKKLVKNIKSVSLANSKTTADLLLIEMHDGNVVRVPQSQLTLKLPYYQKLKKNLENDSIVDMEVGIYTTTQEIENQPEVPLTPEQNAADKEGDKPGEHQEQTDNDSETPANQSSPQQTPPSPETVLEQAHG</sequence>
<organism>
    <name type="scientific">Streptococcus pyogenes serotype M2 (strain MGAS10270)</name>
    <dbReference type="NCBI Taxonomy" id="370552"/>
    <lineage>
        <taxon>Bacteria</taxon>
        <taxon>Bacillati</taxon>
        <taxon>Bacillota</taxon>
        <taxon>Bacilli</taxon>
        <taxon>Lactobacillales</taxon>
        <taxon>Streptococcaceae</taxon>
        <taxon>Streptococcus</taxon>
    </lineage>
</organism>
<accession>Q1JG12</accession>
<proteinExistence type="inferred from homology"/>
<dbReference type="EMBL" id="CP000260">
    <property type="protein sequence ID" value="ABF34332.1"/>
    <property type="molecule type" value="Genomic_DNA"/>
</dbReference>
<dbReference type="KEGG" id="sph:MGAS10270_Spy1267"/>
<dbReference type="HOGENOM" id="CLU_046278_1_0_9"/>
<dbReference type="Proteomes" id="UP000002436">
    <property type="component" value="Chromosome"/>
</dbReference>
<dbReference type="GO" id="GO:0032153">
    <property type="term" value="C:cell division site"/>
    <property type="evidence" value="ECO:0007669"/>
    <property type="project" value="UniProtKB-UniRule"/>
</dbReference>
<dbReference type="GO" id="GO:0005886">
    <property type="term" value="C:plasma membrane"/>
    <property type="evidence" value="ECO:0007669"/>
    <property type="project" value="UniProtKB-SubCell"/>
</dbReference>
<dbReference type="GO" id="GO:0043093">
    <property type="term" value="P:FtsZ-dependent cytokinesis"/>
    <property type="evidence" value="ECO:0007669"/>
    <property type="project" value="UniProtKB-UniRule"/>
</dbReference>
<dbReference type="Gene3D" id="3.40.50.10960">
    <property type="match status" value="1"/>
</dbReference>
<dbReference type="HAMAP" id="MF_00912">
    <property type="entry name" value="DivIB"/>
    <property type="match status" value="1"/>
</dbReference>
<dbReference type="InterPro" id="IPR005548">
    <property type="entry name" value="Cell_div_FtsQ/DivIB_C"/>
</dbReference>
<dbReference type="InterPro" id="IPR026580">
    <property type="entry name" value="DivIB"/>
</dbReference>
<dbReference type="InterPro" id="IPR050487">
    <property type="entry name" value="FtsQ_DivIB"/>
</dbReference>
<dbReference type="InterPro" id="IPR034746">
    <property type="entry name" value="POTRA"/>
</dbReference>
<dbReference type="InterPro" id="IPR013685">
    <property type="entry name" value="POTRA_FtsQ_type"/>
</dbReference>
<dbReference type="PANTHER" id="PTHR37820">
    <property type="entry name" value="CELL DIVISION PROTEIN DIVIB"/>
    <property type="match status" value="1"/>
</dbReference>
<dbReference type="PANTHER" id="PTHR37820:SF1">
    <property type="entry name" value="CELL DIVISION PROTEIN FTSQ"/>
    <property type="match status" value="1"/>
</dbReference>
<dbReference type="Pfam" id="PF03799">
    <property type="entry name" value="FtsQ_DivIB_C"/>
    <property type="match status" value="1"/>
</dbReference>
<dbReference type="Pfam" id="PF08478">
    <property type="entry name" value="POTRA_1"/>
    <property type="match status" value="1"/>
</dbReference>
<dbReference type="PROSITE" id="PS51779">
    <property type="entry name" value="POTRA"/>
    <property type="match status" value="1"/>
</dbReference>
<evidence type="ECO:0000255" key="1">
    <source>
        <dbReference type="HAMAP-Rule" id="MF_00912"/>
    </source>
</evidence>
<evidence type="ECO:0000255" key="2">
    <source>
        <dbReference type="PROSITE-ProRule" id="PRU01115"/>
    </source>
</evidence>
<evidence type="ECO:0000256" key="3">
    <source>
        <dbReference type="SAM" id="MobiDB-lite"/>
    </source>
</evidence>
<protein>
    <recommendedName>
        <fullName evidence="1">Cell division protein DivIB</fullName>
    </recommendedName>
</protein>
<gene>
    <name evidence="1" type="primary">divIB</name>
    <name type="ordered locus">MGAS10270_Spy1267</name>
</gene>
<reference key="1">
    <citation type="journal article" date="2006" name="Proc. Natl. Acad. Sci. U.S.A.">
        <title>Molecular genetic anatomy of inter- and intraserotype variation in the human bacterial pathogen group A Streptococcus.</title>
        <authorList>
            <person name="Beres S.B."/>
            <person name="Richter E.W."/>
            <person name="Nagiec M.J."/>
            <person name="Sumby P."/>
            <person name="Porcella S.F."/>
            <person name="DeLeo F.R."/>
            <person name="Musser J.M."/>
        </authorList>
    </citation>
    <scope>NUCLEOTIDE SEQUENCE [LARGE SCALE GENOMIC DNA]</scope>
    <source>
        <strain>MGAS10270</strain>
    </source>
</reference>
<comment type="function">
    <text evidence="1">Cell division protein that may be involved in stabilizing or promoting the assembly of the division complex.</text>
</comment>
<comment type="subcellular location">
    <subcellularLocation>
        <location evidence="1">Cell membrane</location>
        <topology evidence="1">Single-pass type II membrane protein</topology>
    </subcellularLocation>
    <text evidence="1">Localizes to the division septum.</text>
</comment>
<comment type="similarity">
    <text evidence="1">Belongs to the FtsQ/DivIB family. DivIB subfamily.</text>
</comment>